<organism>
    <name type="scientific">Leptospira borgpetersenii serovar Hardjo-bovis (strain L550)</name>
    <dbReference type="NCBI Taxonomy" id="355276"/>
    <lineage>
        <taxon>Bacteria</taxon>
        <taxon>Pseudomonadati</taxon>
        <taxon>Spirochaetota</taxon>
        <taxon>Spirochaetia</taxon>
        <taxon>Leptospirales</taxon>
        <taxon>Leptospiraceae</taxon>
        <taxon>Leptospira</taxon>
    </lineage>
</organism>
<feature type="chain" id="PRO_1000131982" description="Aspartate/glutamate leucyltransferase">
    <location>
        <begin position="1"/>
        <end position="255"/>
    </location>
</feature>
<accession>Q050N5</accession>
<comment type="function">
    <text evidence="1">Functions in the N-end rule pathway of protein degradation where it conjugates Leu from its aminoacyl-tRNA to the N-termini of proteins containing an N-terminal aspartate or glutamate.</text>
</comment>
<comment type="catalytic activity">
    <reaction evidence="1">
        <text>N-terminal L-glutamyl-[protein] + L-leucyl-tRNA(Leu) = N-terminal L-leucyl-L-glutamyl-[protein] + tRNA(Leu) + H(+)</text>
        <dbReference type="Rhea" id="RHEA:50412"/>
        <dbReference type="Rhea" id="RHEA-COMP:9613"/>
        <dbReference type="Rhea" id="RHEA-COMP:9622"/>
        <dbReference type="Rhea" id="RHEA-COMP:12664"/>
        <dbReference type="Rhea" id="RHEA-COMP:12668"/>
        <dbReference type="ChEBI" id="CHEBI:15378"/>
        <dbReference type="ChEBI" id="CHEBI:64721"/>
        <dbReference type="ChEBI" id="CHEBI:78442"/>
        <dbReference type="ChEBI" id="CHEBI:78494"/>
        <dbReference type="ChEBI" id="CHEBI:133041"/>
        <dbReference type="EC" id="2.3.2.29"/>
    </reaction>
</comment>
<comment type="catalytic activity">
    <reaction evidence="1">
        <text>N-terminal L-aspartyl-[protein] + L-leucyl-tRNA(Leu) = N-terminal L-leucyl-L-aspartyl-[protein] + tRNA(Leu) + H(+)</text>
        <dbReference type="Rhea" id="RHEA:50420"/>
        <dbReference type="Rhea" id="RHEA-COMP:9613"/>
        <dbReference type="Rhea" id="RHEA-COMP:9622"/>
        <dbReference type="Rhea" id="RHEA-COMP:12669"/>
        <dbReference type="Rhea" id="RHEA-COMP:12674"/>
        <dbReference type="ChEBI" id="CHEBI:15378"/>
        <dbReference type="ChEBI" id="CHEBI:64720"/>
        <dbReference type="ChEBI" id="CHEBI:78442"/>
        <dbReference type="ChEBI" id="CHEBI:78494"/>
        <dbReference type="ChEBI" id="CHEBI:133042"/>
        <dbReference type="EC" id="2.3.2.29"/>
    </reaction>
</comment>
<comment type="subcellular location">
    <subcellularLocation>
        <location evidence="1">Cytoplasm</location>
    </subcellularLocation>
</comment>
<comment type="similarity">
    <text evidence="1">Belongs to the R-transferase family. Bpt subfamily.</text>
</comment>
<reference key="1">
    <citation type="journal article" date="2006" name="Proc. Natl. Acad. Sci. U.S.A.">
        <title>Genome reduction in Leptospira borgpetersenii reflects limited transmission potential.</title>
        <authorList>
            <person name="Bulach D.M."/>
            <person name="Zuerner R.L."/>
            <person name="Wilson P."/>
            <person name="Seemann T."/>
            <person name="McGrath A."/>
            <person name="Cullen P.A."/>
            <person name="Davis J."/>
            <person name="Johnson M."/>
            <person name="Kuczek E."/>
            <person name="Alt D.P."/>
            <person name="Peterson-Burch B."/>
            <person name="Coppel R.L."/>
            <person name="Rood J.I."/>
            <person name="Davies J.K."/>
            <person name="Adler B."/>
        </authorList>
    </citation>
    <scope>NUCLEOTIDE SEQUENCE [LARGE SCALE GENOMIC DNA]</scope>
    <source>
        <strain>L550</strain>
    </source>
</reference>
<sequence length="255" mass="30216">MIRHKLQNFVNSLPISPERSCSYYPDRLSQIQYLPLQGKIEKDNLQFFFDSGFRRTGNILYRTSCNACRECLSYRVPLNQFVPSRNRKRLLKKNSDLVVRFGSPHLTVEKEILYLRYQRSRYQSFVIGESDQELLEGMRWNLFGYPENSLEMTLSLDEKILGFMILDSASDSLSAVYSVYDPDYPDRSLGSFAILYSILYAKELGMKYYHLGYFLPGHPDMDYKKHWVPSEIRELDTNDWIPFEEFQKKYADFSW</sequence>
<protein>
    <recommendedName>
        <fullName evidence="1">Aspartate/glutamate leucyltransferase</fullName>
        <ecNumber evidence="1">2.3.2.29</ecNumber>
    </recommendedName>
</protein>
<keyword id="KW-0012">Acyltransferase</keyword>
<keyword id="KW-0963">Cytoplasm</keyword>
<keyword id="KW-0808">Transferase</keyword>
<name>BPT_LEPBL</name>
<proteinExistence type="inferred from homology"/>
<dbReference type="EC" id="2.3.2.29" evidence="1"/>
<dbReference type="EMBL" id="CP000348">
    <property type="protein sequence ID" value="ABJ79210.1"/>
    <property type="molecule type" value="Genomic_DNA"/>
</dbReference>
<dbReference type="RefSeq" id="WP_011670327.1">
    <property type="nucleotide sequence ID" value="NC_008508.1"/>
</dbReference>
<dbReference type="SMR" id="Q050N5"/>
<dbReference type="KEGG" id="lbl:LBL_1764"/>
<dbReference type="HOGENOM" id="CLU_077607_0_0_12"/>
<dbReference type="GO" id="GO:0005737">
    <property type="term" value="C:cytoplasm"/>
    <property type="evidence" value="ECO:0007669"/>
    <property type="project" value="UniProtKB-SubCell"/>
</dbReference>
<dbReference type="GO" id="GO:0004057">
    <property type="term" value="F:arginyl-tRNA--protein transferase activity"/>
    <property type="evidence" value="ECO:0007669"/>
    <property type="project" value="InterPro"/>
</dbReference>
<dbReference type="GO" id="GO:0008914">
    <property type="term" value="F:leucyl-tRNA--protein transferase activity"/>
    <property type="evidence" value="ECO:0007669"/>
    <property type="project" value="UniProtKB-UniRule"/>
</dbReference>
<dbReference type="GO" id="GO:0071596">
    <property type="term" value="P:ubiquitin-dependent protein catabolic process via the N-end rule pathway"/>
    <property type="evidence" value="ECO:0007669"/>
    <property type="project" value="InterPro"/>
</dbReference>
<dbReference type="HAMAP" id="MF_00689">
    <property type="entry name" value="Bpt"/>
    <property type="match status" value="1"/>
</dbReference>
<dbReference type="InterPro" id="IPR016181">
    <property type="entry name" value="Acyl_CoA_acyltransferase"/>
</dbReference>
<dbReference type="InterPro" id="IPR017138">
    <property type="entry name" value="Asp_Glu_LeuTrfase"/>
</dbReference>
<dbReference type="InterPro" id="IPR030700">
    <property type="entry name" value="N-end_Aminoacyl_Trfase"/>
</dbReference>
<dbReference type="InterPro" id="IPR007472">
    <property type="entry name" value="N-end_Aminoacyl_Trfase_C"/>
</dbReference>
<dbReference type="InterPro" id="IPR007471">
    <property type="entry name" value="N-end_Aminoacyl_Trfase_N"/>
</dbReference>
<dbReference type="NCBIfam" id="NF002346">
    <property type="entry name" value="PRK01305.2-3"/>
    <property type="match status" value="1"/>
</dbReference>
<dbReference type="PANTHER" id="PTHR21367">
    <property type="entry name" value="ARGININE-TRNA-PROTEIN TRANSFERASE 1"/>
    <property type="match status" value="1"/>
</dbReference>
<dbReference type="PANTHER" id="PTHR21367:SF1">
    <property type="entry name" value="ARGINYL-TRNA--PROTEIN TRANSFERASE 1"/>
    <property type="match status" value="1"/>
</dbReference>
<dbReference type="Pfam" id="PF04377">
    <property type="entry name" value="ATE_C"/>
    <property type="match status" value="1"/>
</dbReference>
<dbReference type="Pfam" id="PF04376">
    <property type="entry name" value="ATE_N"/>
    <property type="match status" value="1"/>
</dbReference>
<dbReference type="PIRSF" id="PIRSF037208">
    <property type="entry name" value="ATE_pro_prd"/>
    <property type="match status" value="1"/>
</dbReference>
<dbReference type="SUPFAM" id="SSF55729">
    <property type="entry name" value="Acyl-CoA N-acyltransferases (Nat)"/>
    <property type="match status" value="1"/>
</dbReference>
<evidence type="ECO:0000255" key="1">
    <source>
        <dbReference type="HAMAP-Rule" id="MF_00689"/>
    </source>
</evidence>
<gene>
    <name evidence="1" type="primary">bpt</name>
    <name type="ordered locus">LBL_1764</name>
</gene>